<sequence length="277" mass="30797">MNMNGFDPFEWRSFYFPGMSREDAHKLLGEPRVSIGTFLMRDSSQPGEYSLSVREADEGNTVCHYLIVRDVKEDGTAGVKIAEQSFPDIPALLNHFKMRVLTEASLLSAYKKPIIEVVVGTFKFTGERETDLPFEQGERLEILSKTNNDWWEARNALGTTGLVPANYVQVQSGEFANERISKGTSQSSIGSSGNGAERFSSTSTSSENAEAHPTLPTTAKVTFDRVPNAYDPTQLRVKKGQTVRVLEKMSNGMYRAELDGQIGSVPFTYIRFNTANQ</sequence>
<keyword id="KW-0581">Phagocytosis</keyword>
<keyword id="KW-1185">Reference proteome</keyword>
<keyword id="KW-0677">Repeat</keyword>
<keyword id="KW-0727">SH2 domain</keyword>
<keyword id="KW-0728">SH3 domain</keyword>
<organism>
    <name type="scientific">Caenorhabditis briggsae</name>
    <dbReference type="NCBI Taxonomy" id="6238"/>
    <lineage>
        <taxon>Eukaryota</taxon>
        <taxon>Metazoa</taxon>
        <taxon>Ecdysozoa</taxon>
        <taxon>Nematoda</taxon>
        <taxon>Chromadorea</taxon>
        <taxon>Rhabditida</taxon>
        <taxon>Rhabditina</taxon>
        <taxon>Rhabditomorpha</taxon>
        <taxon>Rhabditoidea</taxon>
        <taxon>Rhabditidae</taxon>
        <taxon>Peloderinae</taxon>
        <taxon>Caenorhabditis</taxon>
    </lineage>
</organism>
<name>CED2_CAEBR</name>
<protein>
    <recommendedName>
        <fullName evidence="1">Cell death abnormality protein 2</fullName>
    </recommendedName>
</protein>
<accession>A8XI74</accession>
<feature type="chain" id="PRO_0000379933" description="Cell death abnormality protein 2">
    <location>
        <begin position="1"/>
        <end position="277"/>
    </location>
</feature>
<feature type="domain" description="SH2" evidence="3">
    <location>
        <begin position="14"/>
        <end position="112"/>
    </location>
</feature>
<feature type="domain" description="SH3 1" evidence="4">
    <location>
        <begin position="113"/>
        <end position="173"/>
    </location>
</feature>
<feature type="domain" description="SH3 2" evidence="4">
    <location>
        <begin position="214"/>
        <end position="275"/>
    </location>
</feature>
<feature type="region of interest" description="Disordered" evidence="5">
    <location>
        <begin position="179"/>
        <end position="217"/>
    </location>
</feature>
<feature type="compositionally biased region" description="Low complexity" evidence="5">
    <location>
        <begin position="182"/>
        <end position="206"/>
    </location>
</feature>
<evidence type="ECO:0000250" key="1">
    <source>
        <dbReference type="UniProtKB" id="Q9NHC3"/>
    </source>
</evidence>
<evidence type="ECO:0000255" key="2"/>
<evidence type="ECO:0000255" key="3">
    <source>
        <dbReference type="PROSITE-ProRule" id="PRU00191"/>
    </source>
</evidence>
<evidence type="ECO:0000255" key="4">
    <source>
        <dbReference type="PROSITE-ProRule" id="PRU00192"/>
    </source>
</evidence>
<evidence type="ECO:0000256" key="5">
    <source>
        <dbReference type="SAM" id="MobiDB-lite"/>
    </source>
</evidence>
<evidence type="ECO:0000312" key="6">
    <source>
        <dbReference type="EMBL" id="CAP32348.1"/>
    </source>
</evidence>
<comment type="function">
    <text evidence="1">Required for cell migration and engulfment of cell corpses but not for programmed cell death/apoptosis. Also has a role in the migration of the 2 gonadal distal tip cells (DTCs) (By similarity).</text>
</comment>
<comment type="subunit">
    <text evidence="1">Interacts with ced-5 (via C-terminus which contains a candidate SH3-binding, proline-rich region). Forms a ternary complex with ced-5 and ced-12. Interacts (via SH-2 domain) with src-1 (when activated and phosphorylated at 'Tyr-416').</text>
</comment>
<comment type="similarity">
    <text evidence="2">Belongs to the CRK family.</text>
</comment>
<proteinExistence type="inferred from homology"/>
<gene>
    <name evidence="6" type="primary">ced-2</name>
    <name type="ORF">CBG13568</name>
</gene>
<dbReference type="EMBL" id="HE600980">
    <property type="protein sequence ID" value="CAP32348.1"/>
    <property type="molecule type" value="Genomic_DNA"/>
</dbReference>
<dbReference type="SMR" id="A8XI74"/>
<dbReference type="FunCoup" id="A8XI74">
    <property type="interactions" value="2299"/>
</dbReference>
<dbReference type="STRING" id="6238.A8XI74"/>
<dbReference type="EnsemblMetazoa" id="CBG13568.1">
    <property type="protein sequence ID" value="CBG13568.1"/>
    <property type="gene ID" value="WBGene00034318"/>
</dbReference>
<dbReference type="KEGG" id="cbr:CBG_13568"/>
<dbReference type="CTD" id="8577019"/>
<dbReference type="WormBase" id="CBG13568">
    <property type="protein sequence ID" value="CBP03281"/>
    <property type="gene ID" value="WBGene00034318"/>
    <property type="gene designation" value="Cbr-ced-2"/>
</dbReference>
<dbReference type="eggNOG" id="KOG4792">
    <property type="taxonomic scope" value="Eukaryota"/>
</dbReference>
<dbReference type="HOGENOM" id="CLU_060542_0_0_1"/>
<dbReference type="InParanoid" id="A8XI74"/>
<dbReference type="OMA" id="QWEGECG"/>
<dbReference type="OrthoDB" id="9204160at2759"/>
<dbReference type="Proteomes" id="UP000008549">
    <property type="component" value="Unassembled WGS sequence"/>
</dbReference>
<dbReference type="GO" id="GO:0005737">
    <property type="term" value="C:cytoplasm"/>
    <property type="evidence" value="ECO:0000318"/>
    <property type="project" value="GO_Central"/>
</dbReference>
<dbReference type="GO" id="GO:0044877">
    <property type="term" value="F:protein-containing complex binding"/>
    <property type="evidence" value="ECO:0000250"/>
    <property type="project" value="UniProtKB"/>
</dbReference>
<dbReference type="GO" id="GO:0030971">
    <property type="term" value="F:receptor tyrosine kinase binding"/>
    <property type="evidence" value="ECO:0000318"/>
    <property type="project" value="GO_Central"/>
</dbReference>
<dbReference type="GO" id="GO:0035591">
    <property type="term" value="F:signaling adaptor activity"/>
    <property type="evidence" value="ECO:0000318"/>
    <property type="project" value="GO_Central"/>
</dbReference>
<dbReference type="GO" id="GO:0030036">
    <property type="term" value="P:actin cytoskeleton organization"/>
    <property type="evidence" value="ECO:0000250"/>
    <property type="project" value="UniProtKB"/>
</dbReference>
<dbReference type="GO" id="GO:0006915">
    <property type="term" value="P:apoptotic process"/>
    <property type="evidence" value="ECO:0000250"/>
    <property type="project" value="UniProtKB"/>
</dbReference>
<dbReference type="GO" id="GO:1902742">
    <property type="term" value="P:apoptotic process involved in development"/>
    <property type="evidence" value="ECO:0007669"/>
    <property type="project" value="EnsemblMetazoa"/>
</dbReference>
<dbReference type="GO" id="GO:0016477">
    <property type="term" value="P:cell migration"/>
    <property type="evidence" value="ECO:0000250"/>
    <property type="project" value="UniProtKB"/>
</dbReference>
<dbReference type="GO" id="GO:0043652">
    <property type="term" value="P:engulfment of apoptotic cell"/>
    <property type="evidence" value="ECO:0000250"/>
    <property type="project" value="UniProtKB"/>
</dbReference>
<dbReference type="GO" id="GO:0007167">
    <property type="term" value="P:enzyme-linked receptor protein signaling pathway"/>
    <property type="evidence" value="ECO:0000318"/>
    <property type="project" value="GO_Central"/>
</dbReference>
<dbReference type="GO" id="GO:1903356">
    <property type="term" value="P:positive regulation of distal tip cell migration"/>
    <property type="evidence" value="ECO:0007669"/>
    <property type="project" value="EnsemblMetazoa"/>
</dbReference>
<dbReference type="GO" id="GO:1901076">
    <property type="term" value="P:positive regulation of engulfment of apoptotic cell"/>
    <property type="evidence" value="ECO:0007669"/>
    <property type="project" value="EnsemblMetazoa"/>
</dbReference>
<dbReference type="GO" id="GO:0007165">
    <property type="term" value="P:signal transduction"/>
    <property type="evidence" value="ECO:0000250"/>
    <property type="project" value="UniProtKB"/>
</dbReference>
<dbReference type="CDD" id="cd00173">
    <property type="entry name" value="SH2"/>
    <property type="match status" value="1"/>
</dbReference>
<dbReference type="CDD" id="cd11767">
    <property type="entry name" value="SH3_Nck_3"/>
    <property type="match status" value="1"/>
</dbReference>
<dbReference type="FunFam" id="2.30.30.40:FF:000356">
    <property type="entry name" value="Cell death abnormality protein 2"/>
    <property type="match status" value="1"/>
</dbReference>
<dbReference type="FunFam" id="2.30.30.40:FF:000411">
    <property type="entry name" value="Cell death abnormality protein 2"/>
    <property type="match status" value="1"/>
</dbReference>
<dbReference type="FunFam" id="3.30.505.10:FF:000110">
    <property type="entry name" value="Cell death abnormality protein 2"/>
    <property type="match status" value="1"/>
</dbReference>
<dbReference type="Gene3D" id="3.30.505.10">
    <property type="entry name" value="SH2 domain"/>
    <property type="match status" value="1"/>
</dbReference>
<dbReference type="Gene3D" id="2.30.30.40">
    <property type="entry name" value="SH3 Domains"/>
    <property type="match status" value="2"/>
</dbReference>
<dbReference type="InterPro" id="IPR000980">
    <property type="entry name" value="SH2"/>
</dbReference>
<dbReference type="InterPro" id="IPR036860">
    <property type="entry name" value="SH2_dom_sf"/>
</dbReference>
<dbReference type="InterPro" id="IPR036028">
    <property type="entry name" value="SH3-like_dom_sf"/>
</dbReference>
<dbReference type="InterPro" id="IPR001452">
    <property type="entry name" value="SH3_domain"/>
</dbReference>
<dbReference type="InterPro" id="IPR051184">
    <property type="entry name" value="Tyrosine-phos_adapter"/>
</dbReference>
<dbReference type="PANTHER" id="PTHR19969:SF5">
    <property type="entry name" value="CRK-LIKE PROTEIN"/>
    <property type="match status" value="1"/>
</dbReference>
<dbReference type="PANTHER" id="PTHR19969">
    <property type="entry name" value="SH2-SH3 ADAPTOR PROTEIN-RELATED"/>
    <property type="match status" value="1"/>
</dbReference>
<dbReference type="Pfam" id="PF00017">
    <property type="entry name" value="SH2"/>
    <property type="match status" value="1"/>
</dbReference>
<dbReference type="Pfam" id="PF07653">
    <property type="entry name" value="SH3_2"/>
    <property type="match status" value="1"/>
</dbReference>
<dbReference type="Pfam" id="PF14604">
    <property type="entry name" value="SH3_9"/>
    <property type="match status" value="1"/>
</dbReference>
<dbReference type="PRINTS" id="PR00401">
    <property type="entry name" value="SH2DOMAIN"/>
</dbReference>
<dbReference type="PRINTS" id="PR00452">
    <property type="entry name" value="SH3DOMAIN"/>
</dbReference>
<dbReference type="SMART" id="SM00252">
    <property type="entry name" value="SH2"/>
    <property type="match status" value="1"/>
</dbReference>
<dbReference type="SMART" id="SM00326">
    <property type="entry name" value="SH3"/>
    <property type="match status" value="2"/>
</dbReference>
<dbReference type="SUPFAM" id="SSF55550">
    <property type="entry name" value="SH2 domain"/>
    <property type="match status" value="1"/>
</dbReference>
<dbReference type="SUPFAM" id="SSF50044">
    <property type="entry name" value="SH3-domain"/>
    <property type="match status" value="2"/>
</dbReference>
<dbReference type="PROSITE" id="PS50001">
    <property type="entry name" value="SH2"/>
    <property type="match status" value="1"/>
</dbReference>
<dbReference type="PROSITE" id="PS50002">
    <property type="entry name" value="SH3"/>
    <property type="match status" value="2"/>
</dbReference>
<reference evidence="6" key="1">
    <citation type="journal article" date="2003" name="PLoS Biol.">
        <title>The genome sequence of Caenorhabditis briggsae: a platform for comparative genomics.</title>
        <authorList>
            <person name="Stein L.D."/>
            <person name="Bao Z."/>
            <person name="Blasiar D."/>
            <person name="Blumenthal T."/>
            <person name="Brent M.R."/>
            <person name="Chen N."/>
            <person name="Chinwalla A."/>
            <person name="Clarke L."/>
            <person name="Clee C."/>
            <person name="Coghlan A."/>
            <person name="Coulson A."/>
            <person name="D'Eustachio P."/>
            <person name="Fitch D.H.A."/>
            <person name="Fulton L.A."/>
            <person name="Fulton R.E."/>
            <person name="Griffiths-Jones S."/>
            <person name="Harris T.W."/>
            <person name="Hillier L.W."/>
            <person name="Kamath R."/>
            <person name="Kuwabara P.E."/>
            <person name="Mardis E.R."/>
            <person name="Marra M.A."/>
            <person name="Miner T.L."/>
            <person name="Minx P."/>
            <person name="Mullikin J.C."/>
            <person name="Plumb R.W."/>
            <person name="Rogers J."/>
            <person name="Schein J.E."/>
            <person name="Sohrmann M."/>
            <person name="Spieth J."/>
            <person name="Stajich J.E."/>
            <person name="Wei C."/>
            <person name="Willey D."/>
            <person name="Wilson R.K."/>
            <person name="Durbin R.M."/>
            <person name="Waterston R.H."/>
        </authorList>
    </citation>
    <scope>NUCLEOTIDE SEQUENCE [LARGE SCALE GENOMIC DNA]</scope>
    <source>
        <strain evidence="6">AF16</strain>
    </source>
</reference>